<protein>
    <recommendedName>
        <fullName evidence="5">Nonribosomal peptide synthetase 4</fullName>
        <shortName evidence="5">NRPS 4</shortName>
        <ecNumber evidence="4">6.3.2.-</ecNumber>
    </recommendedName>
    <alternativeName>
        <fullName evidence="6">Fusahexin biosynthesis cluster protein NPRS4</fullName>
    </alternativeName>
</protein>
<feature type="chain" id="PRO_0000455674" description="Nonribosomal peptide synthetase 4">
    <location>
        <begin position="1"/>
        <end position="7639"/>
    </location>
</feature>
<feature type="domain" description="Carrier 1" evidence="2 8 9">
    <location>
        <begin position="776"/>
        <end position="852"/>
    </location>
</feature>
<feature type="domain" description="Carrier 2" evidence="2 8 9">
    <location>
        <begin position="2313"/>
        <end position="2389"/>
    </location>
</feature>
<feature type="domain" description="Carrier 3" evidence="2 8 9">
    <location>
        <begin position="3403"/>
        <end position="3479"/>
    </location>
</feature>
<feature type="domain" description="Carrier 4" evidence="2 8 9">
    <location>
        <begin position="4944"/>
        <end position="5020"/>
    </location>
</feature>
<feature type="domain" description="Carrier 5" evidence="2 8 9">
    <location>
        <begin position="6039"/>
        <end position="6115"/>
    </location>
</feature>
<feature type="domain" description="Carrier 6" evidence="2 8 9">
    <location>
        <begin position="7088"/>
        <end position="7164"/>
    </location>
</feature>
<feature type="region of interest" description="Adenylation 1" evidence="1 8 9">
    <location>
        <begin position="244"/>
        <end position="636"/>
    </location>
</feature>
<feature type="region of interest" description="Epimerization 1" evidence="1 8 9">
    <location>
        <begin position="865"/>
        <end position="1295"/>
    </location>
</feature>
<feature type="region of interest" description="Condensation 1" evidence="1 8 9">
    <location>
        <begin position="1337"/>
        <end position="1767"/>
    </location>
</feature>
<feature type="region of interest" description="Adenylation 2" evidence="1 8 9">
    <location>
        <begin position="1786"/>
        <end position="2181"/>
    </location>
</feature>
<feature type="region of interest" description="Condensation 2" evidence="1 8 9">
    <location>
        <begin position="2426"/>
        <end position="2852"/>
    </location>
</feature>
<feature type="region of interest" description="Adenylation 3" evidence="1 8 9">
    <location>
        <begin position="2878"/>
        <end position="3269"/>
    </location>
</feature>
<feature type="region of interest" description="Epimerization 2" evidence="1 8 9">
    <location>
        <begin position="3491"/>
        <end position="3928"/>
    </location>
</feature>
<feature type="region of interest" description="Condensation 3" evidence="1 8 9">
    <location>
        <begin position="3961"/>
        <end position="4389"/>
    </location>
</feature>
<feature type="region of interest" description="Adenylation 4" evidence="1 8 9">
    <location>
        <begin position="4407"/>
        <end position="4810"/>
    </location>
</feature>
<feature type="region of interest" description="Condensation 4" evidence="1 8 9">
    <location>
        <begin position="5058"/>
        <end position="5478"/>
    </location>
</feature>
<feature type="region of interest" description="Adenylation 5" evidence="1 8 9">
    <location>
        <begin position="5498"/>
        <end position="5900"/>
    </location>
</feature>
<feature type="region of interest" description="Epimerization 3" evidence="1 8 9">
    <location>
        <begin position="6133"/>
        <end position="6567"/>
    </location>
</feature>
<feature type="region of interest" description="Condensation 5" evidence="1 8 9">
    <location>
        <begin position="6607"/>
        <end position="7032"/>
    </location>
</feature>
<feature type="region of interest" description="Condensation 6" evidence="1 8 9">
    <location>
        <begin position="7254"/>
        <end position="7603"/>
    </location>
</feature>
<feature type="modified residue" description="O-(pantetheine 4'-phosphoryl)serine" evidence="2">
    <location>
        <position position="813"/>
    </location>
</feature>
<feature type="modified residue" description="O-(pantetheine 4'-phosphoryl)serine" evidence="2">
    <location>
        <position position="2350"/>
    </location>
</feature>
<feature type="modified residue" description="O-(pantetheine 4'-phosphoryl)serine" evidence="2">
    <location>
        <position position="3440"/>
    </location>
</feature>
<feature type="modified residue" description="O-(pantetheine 4'-phosphoryl)serine" evidence="2">
    <location>
        <position position="4981"/>
    </location>
</feature>
<feature type="modified residue" description="O-(pantetheine 4'-phosphoryl)serine" evidence="2">
    <location>
        <position position="6076"/>
    </location>
</feature>
<feature type="modified residue" description="O-(pantetheine 4'-phosphoryl)serine" evidence="2">
    <location>
        <position position="7125"/>
    </location>
</feature>
<gene>
    <name evidence="6" type="primary">NRPS4</name>
    <name type="ORF">FG02315</name>
    <name type="ORF">FGRAMPH1_01T05575</name>
</gene>
<dbReference type="EC" id="6.3.2.-" evidence="4"/>
<dbReference type="EMBL" id="HG970332">
    <property type="protein sequence ID" value="CEF74592.1"/>
    <property type="molecule type" value="Genomic_DNA"/>
</dbReference>
<dbReference type="RefSeq" id="XP_011318224.1">
    <property type="nucleotide sequence ID" value="XM_011319922.1"/>
</dbReference>
<dbReference type="SMR" id="I1RF49"/>
<dbReference type="STRING" id="229533.I1RF49"/>
<dbReference type="KEGG" id="fgr:FGSG_02315"/>
<dbReference type="VEuPathDB" id="FungiDB:FGRAMPH1_01G05575"/>
<dbReference type="eggNOG" id="KOG1178">
    <property type="taxonomic scope" value="Eukaryota"/>
</dbReference>
<dbReference type="HOGENOM" id="CLU_000022_60_0_1"/>
<dbReference type="InParanoid" id="I1RF49"/>
<dbReference type="OrthoDB" id="102263at110618"/>
<dbReference type="Proteomes" id="UP000070720">
    <property type="component" value="Chromosome 1"/>
</dbReference>
<dbReference type="GO" id="GO:0016853">
    <property type="term" value="F:isomerase activity"/>
    <property type="evidence" value="ECO:0007669"/>
    <property type="project" value="UniProtKB-KW"/>
</dbReference>
<dbReference type="GO" id="GO:0016874">
    <property type="term" value="F:ligase activity"/>
    <property type="evidence" value="ECO:0007669"/>
    <property type="project" value="UniProtKB-KW"/>
</dbReference>
<dbReference type="GO" id="GO:0031177">
    <property type="term" value="F:phosphopantetheine binding"/>
    <property type="evidence" value="ECO:0007669"/>
    <property type="project" value="InterPro"/>
</dbReference>
<dbReference type="CDD" id="cd05918">
    <property type="entry name" value="A_NRPS_SidN3_like"/>
    <property type="match status" value="5"/>
</dbReference>
<dbReference type="CDD" id="cd19542">
    <property type="entry name" value="CT_NRPS-like"/>
    <property type="match status" value="4"/>
</dbReference>
<dbReference type="CDD" id="cd19534">
    <property type="entry name" value="E_NRPS"/>
    <property type="match status" value="3"/>
</dbReference>
<dbReference type="CDD" id="cd19545">
    <property type="entry name" value="FUM14_C_NRPS-like"/>
    <property type="match status" value="2"/>
</dbReference>
<dbReference type="FunFam" id="3.40.50.980:FF:000001">
    <property type="entry name" value="Non-ribosomal peptide synthetase"/>
    <property type="match status" value="2"/>
</dbReference>
<dbReference type="FunFam" id="3.30.559.10:FF:000016">
    <property type="entry name" value="Nonribosomal peptide synthase Pes1"/>
    <property type="match status" value="3"/>
</dbReference>
<dbReference type="FunFam" id="3.30.559.30:FF:000002">
    <property type="entry name" value="Nonribosomal peptide synthase Pes1"/>
    <property type="match status" value="3"/>
</dbReference>
<dbReference type="FunFam" id="3.30.559.30:FF:000005">
    <property type="entry name" value="Nonribosomal peptide synthase Pes1"/>
    <property type="match status" value="2"/>
</dbReference>
<dbReference type="FunFam" id="3.30.300.30:FF:000015">
    <property type="entry name" value="Nonribosomal peptide synthase SidD"/>
    <property type="match status" value="5"/>
</dbReference>
<dbReference type="FunFam" id="3.30.559.30:FF:000003">
    <property type="entry name" value="Nonribosomal peptide synthase SidD"/>
    <property type="match status" value="2"/>
</dbReference>
<dbReference type="FunFam" id="1.10.1200.10:FF:000005">
    <property type="entry name" value="Nonribosomal peptide synthetase 1"/>
    <property type="match status" value="2"/>
</dbReference>
<dbReference type="FunFam" id="3.40.50.12780:FF:000014">
    <property type="entry name" value="Nonribosomal peptide synthetase 1"/>
    <property type="match status" value="5"/>
</dbReference>
<dbReference type="Gene3D" id="3.30.300.30">
    <property type="match status" value="5"/>
</dbReference>
<dbReference type="Gene3D" id="1.10.1200.10">
    <property type="entry name" value="ACP-like"/>
    <property type="match status" value="6"/>
</dbReference>
<dbReference type="Gene3D" id="3.30.559.10">
    <property type="entry name" value="Chloramphenicol acetyltransferase-like domain"/>
    <property type="match status" value="9"/>
</dbReference>
<dbReference type="Gene3D" id="3.40.50.12780">
    <property type="entry name" value="N-terminal domain of ligase-like"/>
    <property type="match status" value="5"/>
</dbReference>
<dbReference type="Gene3D" id="3.30.559.30">
    <property type="entry name" value="Nonribosomal peptide synthetase, condensation domain"/>
    <property type="match status" value="9"/>
</dbReference>
<dbReference type="InterPro" id="IPR010071">
    <property type="entry name" value="AA_adenyl_dom"/>
</dbReference>
<dbReference type="InterPro" id="IPR036736">
    <property type="entry name" value="ACP-like_sf"/>
</dbReference>
<dbReference type="InterPro" id="IPR045851">
    <property type="entry name" value="AMP-bd_C_sf"/>
</dbReference>
<dbReference type="InterPro" id="IPR020845">
    <property type="entry name" value="AMP-binding_CS"/>
</dbReference>
<dbReference type="InterPro" id="IPR000873">
    <property type="entry name" value="AMP-dep_synth/lig_dom"/>
</dbReference>
<dbReference type="InterPro" id="IPR042099">
    <property type="entry name" value="ANL_N_sf"/>
</dbReference>
<dbReference type="InterPro" id="IPR023213">
    <property type="entry name" value="CAT-like_dom_sf"/>
</dbReference>
<dbReference type="InterPro" id="IPR001242">
    <property type="entry name" value="Condensatn"/>
</dbReference>
<dbReference type="InterPro" id="IPR020806">
    <property type="entry name" value="PKS_PP-bd"/>
</dbReference>
<dbReference type="InterPro" id="IPR009081">
    <property type="entry name" value="PP-bd_ACP"/>
</dbReference>
<dbReference type="InterPro" id="IPR006162">
    <property type="entry name" value="Ppantetheine_attach_site"/>
</dbReference>
<dbReference type="NCBIfam" id="TIGR01733">
    <property type="entry name" value="AA-adenyl-dom"/>
    <property type="match status" value="5"/>
</dbReference>
<dbReference type="NCBIfam" id="NF003417">
    <property type="entry name" value="PRK04813.1"/>
    <property type="match status" value="5"/>
</dbReference>
<dbReference type="PANTHER" id="PTHR45398">
    <property type="match status" value="1"/>
</dbReference>
<dbReference type="PANTHER" id="PTHR45398:SF1">
    <property type="entry name" value="ENZYME, PUTATIVE (JCVI)-RELATED"/>
    <property type="match status" value="1"/>
</dbReference>
<dbReference type="Pfam" id="PF00501">
    <property type="entry name" value="AMP-binding"/>
    <property type="match status" value="5"/>
</dbReference>
<dbReference type="Pfam" id="PF00668">
    <property type="entry name" value="Condensation"/>
    <property type="match status" value="9"/>
</dbReference>
<dbReference type="Pfam" id="PF00550">
    <property type="entry name" value="PP-binding"/>
    <property type="match status" value="6"/>
</dbReference>
<dbReference type="SMART" id="SM00823">
    <property type="entry name" value="PKS_PP"/>
    <property type="match status" value="4"/>
</dbReference>
<dbReference type="SUPFAM" id="SSF56801">
    <property type="entry name" value="Acetyl-CoA synthetase-like"/>
    <property type="match status" value="5"/>
</dbReference>
<dbReference type="SUPFAM" id="SSF47336">
    <property type="entry name" value="ACP-like"/>
    <property type="match status" value="6"/>
</dbReference>
<dbReference type="SUPFAM" id="SSF52777">
    <property type="entry name" value="CoA-dependent acyltransferases"/>
    <property type="match status" value="18"/>
</dbReference>
<dbReference type="PROSITE" id="PS00455">
    <property type="entry name" value="AMP_BINDING"/>
    <property type="match status" value="4"/>
</dbReference>
<dbReference type="PROSITE" id="PS50075">
    <property type="entry name" value="CARRIER"/>
    <property type="match status" value="6"/>
</dbReference>
<dbReference type="PROSITE" id="PS00012">
    <property type="entry name" value="PHOSPHOPANTETHEINE"/>
    <property type="match status" value="3"/>
</dbReference>
<reference key="1">
    <citation type="journal article" date="2007" name="Science">
        <title>The Fusarium graminearum genome reveals a link between localized polymorphism and pathogen specialization.</title>
        <authorList>
            <person name="Cuomo C.A."/>
            <person name="Gueldener U."/>
            <person name="Xu J.-R."/>
            <person name="Trail F."/>
            <person name="Turgeon B.G."/>
            <person name="Di Pietro A."/>
            <person name="Walton J.D."/>
            <person name="Ma L.-J."/>
            <person name="Baker S.E."/>
            <person name="Rep M."/>
            <person name="Adam G."/>
            <person name="Antoniw J."/>
            <person name="Baldwin T."/>
            <person name="Calvo S.E."/>
            <person name="Chang Y.-L."/>
            <person name="DeCaprio D."/>
            <person name="Gale L.R."/>
            <person name="Gnerre S."/>
            <person name="Goswami R.S."/>
            <person name="Hammond-Kosack K."/>
            <person name="Harris L.J."/>
            <person name="Hilburn K."/>
            <person name="Kennell J.C."/>
            <person name="Kroken S."/>
            <person name="Magnuson J.K."/>
            <person name="Mannhaupt G."/>
            <person name="Mauceli E.W."/>
            <person name="Mewes H.-W."/>
            <person name="Mitterbauer R."/>
            <person name="Muehlbauer G."/>
            <person name="Muensterkoetter M."/>
            <person name="Nelson D."/>
            <person name="O'Donnell K."/>
            <person name="Ouellet T."/>
            <person name="Qi W."/>
            <person name="Quesneville H."/>
            <person name="Roncero M.I.G."/>
            <person name="Seong K.-Y."/>
            <person name="Tetko I.V."/>
            <person name="Urban M."/>
            <person name="Waalwijk C."/>
            <person name="Ward T.J."/>
            <person name="Yao J."/>
            <person name="Birren B.W."/>
            <person name="Kistler H.C."/>
        </authorList>
    </citation>
    <scope>NUCLEOTIDE SEQUENCE [LARGE SCALE GENOMIC DNA]</scope>
    <source>
        <strain>ATCC MYA-4620 / CBS 123657 / FGSC 9075 / NRRL 31084 / PH-1</strain>
    </source>
</reference>
<reference key="2">
    <citation type="journal article" date="2010" name="Nature">
        <title>Comparative genomics reveals mobile pathogenicity chromosomes in Fusarium.</title>
        <authorList>
            <person name="Ma L.-J."/>
            <person name="van der Does H.C."/>
            <person name="Borkovich K.A."/>
            <person name="Coleman J.J."/>
            <person name="Daboussi M.-J."/>
            <person name="Di Pietro A."/>
            <person name="Dufresne M."/>
            <person name="Freitag M."/>
            <person name="Grabherr M."/>
            <person name="Henrissat B."/>
            <person name="Houterman P.M."/>
            <person name="Kang S."/>
            <person name="Shim W.-B."/>
            <person name="Woloshuk C."/>
            <person name="Xie X."/>
            <person name="Xu J.-R."/>
            <person name="Antoniw J."/>
            <person name="Baker S.E."/>
            <person name="Bluhm B.H."/>
            <person name="Breakspear A."/>
            <person name="Brown D.W."/>
            <person name="Butchko R.A.E."/>
            <person name="Chapman S."/>
            <person name="Coulson R."/>
            <person name="Coutinho P.M."/>
            <person name="Danchin E.G.J."/>
            <person name="Diener A."/>
            <person name="Gale L.R."/>
            <person name="Gardiner D.M."/>
            <person name="Goff S."/>
            <person name="Hammond-Kosack K.E."/>
            <person name="Hilburn K."/>
            <person name="Hua-Van A."/>
            <person name="Jonkers W."/>
            <person name="Kazan K."/>
            <person name="Kodira C.D."/>
            <person name="Koehrsen M."/>
            <person name="Kumar L."/>
            <person name="Lee Y.-H."/>
            <person name="Li L."/>
            <person name="Manners J.M."/>
            <person name="Miranda-Saavedra D."/>
            <person name="Mukherjee M."/>
            <person name="Park G."/>
            <person name="Park J."/>
            <person name="Park S.-Y."/>
            <person name="Proctor R.H."/>
            <person name="Regev A."/>
            <person name="Ruiz-Roldan M.C."/>
            <person name="Sain D."/>
            <person name="Sakthikumar S."/>
            <person name="Sykes S."/>
            <person name="Schwartz D.C."/>
            <person name="Turgeon B.G."/>
            <person name="Wapinski I."/>
            <person name="Yoder O."/>
            <person name="Young S."/>
            <person name="Zeng Q."/>
            <person name="Zhou S."/>
            <person name="Galagan J."/>
            <person name="Cuomo C.A."/>
            <person name="Kistler H.C."/>
            <person name="Rep M."/>
        </authorList>
    </citation>
    <scope>GENOME REANNOTATION</scope>
    <source>
        <strain>ATCC MYA-4620 / CBS 123657 / FGSC 9075 / NRRL 31084 / PH-1</strain>
    </source>
</reference>
<reference key="3">
    <citation type="journal article" date="2015" name="BMC Genomics">
        <title>The completed genome sequence of the pathogenic ascomycete fungus Fusarium graminearum.</title>
        <authorList>
            <person name="King R."/>
            <person name="Urban M."/>
            <person name="Hammond-Kosack M.C.U."/>
            <person name="Hassani-Pak K."/>
            <person name="Hammond-Kosack K.E."/>
        </authorList>
    </citation>
    <scope>NUCLEOTIDE SEQUENCE [LARGE SCALE GENOMIC DNA]</scope>
    <source>
        <strain>ATCC MYA-4620 / CBS 123657 / FGSC 9075 / NRRL 31084 / PH-1</strain>
    </source>
</reference>
<reference key="4">
    <citation type="journal article" date="2012" name="Fungal Biol.">
        <title>Overexpression of NRPS4 leads to increased surface hydrophobicity in Fusarium graminearum.</title>
        <authorList>
            <person name="Hansen F.T."/>
            <person name="Droce A."/>
            <person name="Soerensen J.L."/>
            <person name="Fojan P."/>
            <person name="Giese H."/>
            <person name="Sondergaard T.E."/>
        </authorList>
    </citation>
    <scope>FUNCTION</scope>
    <scope>DOMAIN</scope>
    <scope>DISRUPTION PHENOTYPE</scope>
</reference>
<reference key="5">
    <citation type="journal article" date="2021" name="J. Nat. Prod.">
        <title>Cyclic, hydrophobic hexapeptide fusahexin is the product of a nonribosomal peptide synthetase in Fusarium graminearum.</title>
        <authorList>
            <person name="Westphal K.R."/>
            <person name="Bachleitner S."/>
            <person name="Severinsen M.M."/>
            <person name="Brundtoe M.L."/>
            <person name="Hansen F.T."/>
            <person name="Soerensen T."/>
            <person name="Wollenberg R.D."/>
            <person name="Lysoee E."/>
            <person name="Studt L."/>
            <person name="Soerensen J.L."/>
            <person name="Sondergaard T.E."/>
            <person name="Wimmer R."/>
        </authorList>
    </citation>
    <scope>FUNCTION</scope>
    <scope>DOMAIN</scope>
    <scope>CATALYTIC ACTIVITY</scope>
    <scope>DISRUPTION PHENOTYPE</scope>
</reference>
<accession>I1RF49</accession>
<accession>A0A098D813</accession>
<proteinExistence type="evidence at protein level"/>
<comment type="function">
    <text evidence="3 4">Nonribosomal peptide synthetase; part of the gene cluster that mediates the biosynthesis of the fusahexin, a cyclic hydrophobic hexapeptide with the amino acid sequence cyclo-(D-Ala-L-Leu-D-allo-Thr-L-Pro-D-Leu-L-Leu) that plays an important role in cell surface hydrophobicity (PubMed:22862913, PubMed:34292732). Fusahexin might also play a role in virulence, sensitivity to osmotic stress and oxidative stress (PubMed:34292732). NRPS4 is the only enzyme within the cluster and its 5 catalytic modules are sufficient to produce fusahexin (PubMed:34292732). The modules 1 to 4 incorporate respectively D-alanine, L-leucine, D-allo-threonine, and L-proline, which is supported by the presence of epimerase domains in modules 1 and 3, which incorporate D-amino acids (PubMed:34292732). The terminal module is responsible for incorporation of the two adjacent leucine units, where the epimerase domain is only used to convert the first unit to D-leucine (PubMed:34292732). The terminal condensation domain (Ct) is involved in cyclization with D-alanine and thereby releasing of fusahexin (PubMed:34292732).</text>
</comment>
<comment type="catalytic activity">
    <reaction evidence="4">
        <text>D-allo-threonine + D-leucine + D-alanine + L-proline + 2 L-leucine + A = fusahexin + AH2 + 6 H2O</text>
        <dbReference type="Rhea" id="RHEA:72047"/>
        <dbReference type="ChEBI" id="CHEBI:13193"/>
        <dbReference type="ChEBI" id="CHEBI:15377"/>
        <dbReference type="ChEBI" id="CHEBI:17499"/>
        <dbReference type="ChEBI" id="CHEBI:57416"/>
        <dbReference type="ChEBI" id="CHEBI:57427"/>
        <dbReference type="ChEBI" id="CHEBI:58645"/>
        <dbReference type="ChEBI" id="CHEBI:60039"/>
        <dbReference type="ChEBI" id="CHEBI:143079"/>
        <dbReference type="ChEBI" id="CHEBI:191392"/>
    </reaction>
    <physiologicalReaction direction="left-to-right" evidence="4">
        <dbReference type="Rhea" id="RHEA:72048"/>
    </physiologicalReaction>
</comment>
<comment type="pathway">
    <text evidence="4">Secondary metabolite biosynthesis.</text>
</comment>
<comment type="domain">
    <text evidence="8 9">NRP synthetases are composed of discrete domains (adenylation (A), thiolation (T) or peptidyl carrier protein (PCP) and condensation (C) domains) which when grouped together are referred to as a single module. Each module is responsible for the recognition (via the A domain) and incorporation of a single amino acid into the growing peptide product. Thus, an NRP synthetase is generally composed of one or more modules and can terminate in a thioesterase domain (TE) that releases the newly synthesized peptide from the enzyme. Occasionally, methyltransferase domains (responsible for amino acid methylation) are present within the NRP synthetase. NRPS4 has the following architecture: A-T-E-C-A-T-C-A-T-E-C-A-T-C-A-T-E-C-T-Ct.</text>
</comment>
<comment type="disruption phenotype">
    <text evidence="3 4">Does not affect conidiation but results in reduction of cell surface hydrophobicity.</text>
</comment>
<comment type="similarity">
    <text evidence="7">Belongs to the NRP synthetase family.</text>
</comment>
<evidence type="ECO:0000255" key="1"/>
<evidence type="ECO:0000255" key="2">
    <source>
        <dbReference type="PROSITE-ProRule" id="PRU00258"/>
    </source>
</evidence>
<evidence type="ECO:0000269" key="3">
    <source>
    </source>
</evidence>
<evidence type="ECO:0000269" key="4">
    <source>
    </source>
</evidence>
<evidence type="ECO:0000303" key="5">
    <source>
    </source>
</evidence>
<evidence type="ECO:0000303" key="6">
    <source>
    </source>
</evidence>
<evidence type="ECO:0000305" key="7"/>
<evidence type="ECO:0000305" key="8">
    <source>
    </source>
</evidence>
<evidence type="ECO:0000305" key="9">
    <source>
    </source>
</evidence>
<name>NRPS4_GIBZE</name>
<organism>
    <name type="scientific">Gibberella zeae (strain ATCC MYA-4620 / CBS 123657 / FGSC 9075 / NRRL 31084 / PH-1)</name>
    <name type="common">Wheat head blight fungus</name>
    <name type="synonym">Fusarium graminearum</name>
    <dbReference type="NCBI Taxonomy" id="229533"/>
    <lineage>
        <taxon>Eukaryota</taxon>
        <taxon>Fungi</taxon>
        <taxon>Dikarya</taxon>
        <taxon>Ascomycota</taxon>
        <taxon>Pezizomycotina</taxon>
        <taxon>Sordariomycetes</taxon>
        <taxon>Hypocreomycetidae</taxon>
        <taxon>Hypocreales</taxon>
        <taxon>Nectriaceae</taxon>
        <taxon>Fusarium</taxon>
    </lineage>
</organism>
<keyword id="KW-0413">Isomerase</keyword>
<keyword id="KW-0436">Ligase</keyword>
<keyword id="KW-0596">Phosphopantetheine</keyword>
<keyword id="KW-0597">Phosphoprotein</keyword>
<keyword id="KW-1185">Reference proteome</keyword>
<keyword id="KW-0677">Repeat</keyword>
<sequence length="7639" mass="843997">MAPATCCCCADSASQAMPDMEPTIFPASEIKEEIQTMISSYSSRLGHDFNQDLAKPCNMFCLAWAILLERFTGLDNVCFGFRSEHMVTAGSERTGGVASAMQVQVTADHSVQENLDENAFVSVMIPETKAETLFNTTLSICNLGNQPLCEDEARKIDVLCKLHMSVDPATMKTLLSWDSTFMTREQAETISNTYDKIFRELSSKKRTTVSAIHCCSEQDELKILSWNGSPLNNVQKCIHQAVSWQGAMRPDAEAVCSWDGSFSYAQLLSLSDRLAFHLKKLGVGAETFVPICFDKSKWTIVAMLAILKAGGIFVPLDPTQPLLRLQNLTRKVDADTILCSPQHQEMIESIASKVIPVDAQLFESLAEQRGEVDCGSWSSGAYMIFTSGTTGEPKGALIQHGALLSSALAHGPAMMMDNNTRSLHFAASTFDVSITEILTCLILGGCVCIPSEEARLNAIEEAITQLRVNWALLTPTFVKFINPDNVPSLKTLVTGGEAMTQAVIRSWSHINLINCYGPAETSVVSHVHRGMREGKNPLNIGHQVGIHCWVVDRYNHNRLMPVGAVGELVIESHTLAREYYKEPEKTSEAFIVDPEWALNQPHHSSPRRMYKTGDLVRYNYDSSFHIAGRKDAQIKFHGQRIELGEIEYHINVGINIKHGMVVLPKAGFCEGRLLAIVQLSDASGHDLVPNGRPYQLIDGPLEQVAIAKVEETKQLLTERLPSYMVPSMWLAVEFIPRLQSGKLDRKQTGKWVEDMTEETYRKLNPVAVGDPSESLTFSNGTESQLHNIWTHVLNLKPEQLGLSQSFLSVGGDSISAMQVMSECKKRGLGLTVSHIISCKSISALARHVKEIEKPMLLQETTETPFELSPIQRLYFSRSNHDQGHYNQSFLLRVSRRIDESAMRRAIEVVIRKHSMLRARFSRDDTGRWQQRVTDKVESSYRLRSIQLSSNEELSHALIDSQTCLDYANGPLLAADLLDEEGQDQRLFVVAHHLVIDLVSWRIVLQELEELLLRPELKPDMDRPLPFQTWCQMQREHASAQTPEQALPIHGIPDGDPTYWGMEDTPNIYGQMVHEGFEVGSAQTSLLLSKCHDALRTEIPDVLMAAMVYSFGQTFTDRQTPAIFAEGHGRESWDPSIDLSNVVGWFTTIYPVFADSDATSTLIDTIKMVKDGRRKVPDNGRPYFASRWLTESGEKAFARHWPLEITFNYLGQYQQLEREGALFIPVKGIAGEVSSATDGADVGSLATCISLFEVSAVITKGTLRFSFLFNQNMKHQPKIRQWIASCEQNLSLLVESLAVMSPEPTLSDFPLVSLTYDRLRLLTQEKLPEVGIEDMGRVEDIYPCSPMQSGLLVSTTKDSAAYAAYTLHQVKSRSGGAVDVTKLADAWKRMVDYHPMLRTVFVESVTLDESLFDQVLLKEVKVPLVMSELGTDEEAIKTLDKARHHDEYSQLLHVFEICKTTSGNVFCKLDISHVIMDGTSLSILFRDLSLAYAGILGPDKGPPYSEYIRSLQHQGLQHGIEYWKSYLMGIEPCHFPVLDDGEVVDTRESKCFRVEFDELAQLQRLCDDRGVTIVNAIYAAWALVLRLYTASEEVCFGYLTSARDSQIEGIEDVVGPVINMVTCRANISDSTTLGDTMTVVQNDFLNSLKHRHIPLAQVQHALKLSDVALFNTALSYRKLPPALQDAPDVMFEEVRPTYDPDEYDVSINIEAGENDMMIDLTYWSDTMSDGQATNVASAFTTALSNILHHSDKPVAQLNHLGPRHHQQISQWNNVIPEAVESCVHGLFEEQAILRPEAPAITSWDADFTYAELDTTSTKLAHYLADLGVGLEQFVLVCFDKSAFAIVAMLAVLKAGGVCVPLDPAHPDAAIRLRAEDTGASIAAVSSSMASRLSNIVDKAVVVDSNLLQNISENAILPQINPHNACFVIYTSGSTGRPKGVVLEHRGIATNAKSSGPKLGYSEESRVLQFASYTFDNSLAEIFTTLALGGCVCVPSEHERFNDLAGAISRYRVTLADITPTVACLINPLDVPTLKTLALGGEAVTHKCVDIWRDFVSLQCCYGPSECSVNSTYSGEIAQPGKATNIGRAVGSVTWVVDATDHNRLVPIGCIGELLIDGPIVSRGYLNLPEKMAQSFVAPPASLGDMCREGNLSRKLYKTGDLVRYNSDGTLTYFGRKDTQVKLHGQRIELEEIEHHLEQNLPQDWTSAVELIQFEGKKSLASFICADLGSVRSASNEKNTVLAMDDSFRSLAKELEIALSNNLPAYMIPSVWLPVSEMPMTSSGKLDRRSLRSMVQSLPASEMTSYKLALKSGRAPASDMEKQLASMWAHVLNVDANTIGVEDHFFRLGGDSIAAMQLVTLARKSNINLTVTGVFQKGSLLDMAQSALPLSRTAVATVYAFSLLPEVVSLDALKEEIGSCARIQVGDVEDIYPCTPLQQGLMALSAKEPGAYVAQLVFRLPNGTDLDNFKMAWRLVIEAEGTLRTRLVQTTDHGILNVVVKGDVPQWSTDRSLSDLQRLRSHLPSSNGGRLTDYAIVEDGSDVSFVWTIHHALYDGWCLPLILDRVKQCYEGIQSSTSEPIASGPTYSRFIRYLNETDSSQDVKFWESYLSDISTQHFPRLPDPDYKPSASGLIIHKTCFDNTRDGMKSVGLGITTATMIRSAWALTVSTYAASDDVVFWETMTGRDVPVEGIEEMVGATLSTVPTRIALDRSQKVSDLLSSVQAQSAVVRMHQFAGIHTIKRINTDTAFACGAQNLLAINYGPRTSTDSFWCDQTNEMAGTNFYSYPLMLSCHVADGELETVVHFDPDVICESQMHRVMDQFALMLTAVTSKDLVDEKLSELDLISTRDYQSLSEMNGQMVPSCDMCVHDVIKASGIAQPLDKLAVCAWDQNLTYEGLDSQSTHLSSALIEAGVRPNTFVPFCMEKSSMVVVSILAILKSGAAFVPLDYAHPDARISGIIADVEAEFVLSSPQYAERLTKLGAKVISVSKDTIQDSMPLQQHDLSVSTKSPAYCIFTSGTTGRPKGTIIDHSAFCTGALAHGKAMGMNESSRVLQFASHTFDASIMETLSTLIHGGTVCVPSEEERSQDIAGFIRRMSVNWALLTPSVAQLIEPSTVPELKTLVLGGEAMSRAHLSTWAPSVQLMNAYGPSETSVVATVNSNVTLDSSPANIGRAVGGLCWVVDSANADRLLPIGVVGELFVEGPILSQGYLKNSQKNAESFITNPRWCSKFTSETASSERRFYRTGDLVKITEDGSIEFQGRKDNQVKINGQRLELSEIEHHLNTDAIVQACLAFIPTTGPLKSRLVAVLSLHSTFVSRGPDEMQLVIDFARSELTSVRDSLTGQLASYMIPSMWIVVNRIPLLPSGKLDRRRVANWVEAMSPEQYQLAIGAQDESYASGLDREATETETKLRAAWAKVLGIEVESVPFTRSFIQLGGDSISAMQLVAICRSSNMALSVSQIMQSKSIVKLASFVQAVEDVTQDDEQEDKAFPLSPIQKLYFERMYSDSTHFNQSMVLETTRKITPQDLSNALEAIVKTHSMLRARFSDVDGAYSQRITSDIAGSYAFESHVGMDQCRVSELIEKTQKSLNIFQGPLLAAASIEMEDIDKQIVFLAVHHLVVDVVSWNIILQDLEGLLSSSASNLGKPLSFQTWNTLQLEESRNQTPDRVFHNLPTPAQDLAYWGMQAVPNIHGDAIAETIEIASDVSLQLLGPCHEALNTNVVDVLLASLLSSFHQAFPDRLSMPTIFNEGHGREPADNKLDLSRTVGWFTTLCPVYLPDSLPVQPDILDIICWVRDFRRRIPGNGRPYFAHQMLSESGQKESAEWPAELAFNYLGQRQKTELEGSLFKSPDGVLASVGSETDIGADVPRLALIEISASFSRDDLSFSFSYSRQMKHQPCIREWVKNFSATLQTAVERMTQAKAEPQDLDTSLLPLAFRATSKVDTRLAELGISCCADVEAVYPCSPVQMGILFAQIRNPEFYSYSVTFGVNCIEPSRVVDVQRLKDAWQRVVQRHSTLRTTFVDGLLEEGGINQVVLRNHCADISVFERADNDELQMITERIKPKIMSNKPPHHLSIFSSAEGKVTCVLEMSHALSDGTSMPILFRDLAMAYEGSLDPTIVSAYRDYVSYLQCQGPNDIEYWREYLTGAEPCHLPLASKSTLPRALGYLDQTISCAADLQAFCTGAGVTLSNVIQLAWALVLQAYTGHDDVCFGYLLADRDAPVDNIDNAIGVFINMLVLRVRLGSSQSVGDALGAVQQDLSAAIGHKNISLTDIQRVTGLLNEPLFNTAYSFQRRSISKSMANGSLSFDVREAQDPNEYDLTVNVEVWDQAAELQLCYWTDKISNSQAKTIASTFDKILTSIATCDLSLPTNQLDIVSDDCAQQLTRWNNTEPTLLDQCVHHVFERNVQSLPHDTPAIEAWDARFTYSEVDMLSSRLAHHLVSLGILPEMYVPLCFEKSAWTPIAMLAVLKAGAAFVPIDPTHPPERIEFLVQNTSAKLILCSTSLAEKFDIGVPFLAIDHETMSTLSALPVTSPSIAVQPNNAAYIIFTSGTTGLPKGTIVEHAAFTTGGTAHAAAIKMTCSSRVLQFASYTFDASIMEILTTFLVGGCVCVPSDEERMNDLAGTMAKYDVNWALLTPSVAKVLKPGSVPGLKVLVTGGEAMSTDHITKWLGHAALINAYGPSEASVIAASHTKVDENGVILNEEPANIGHAVGCRTWVVDPHNHNHLMPIGSIGELLLEGPILARGYLKNETKTTDAFIDYPPWRANMSLSGDRVDRMYKTGDLVSQNSDGSLNYVSRKDTQIKLNGQRIELGEIEHHVRANLPAHVQSAVELVVPQSKTSTKTLAAFFTVDDHEVLKETSDPLLPMSSAYMEIGQSLKTALRVALPTHMVPTMYVPLTKMPWTSAGKLDRQKLKTIVQSIAPQDIGGYKLVGASNSRAPTTMMQRKLQKIWAGILNIHPSTISIDDSFFRLGGDSISAMKVVSAARMEEISLTVMDILTSPTLSEMATCCGHSENTTVMEVEPFSLLHDVDSPPSLLDEVADCCDVPTSQIQDLYPCSSLQEGLVAASMQQPGAYVARYIFKVPSTIDMERLKMAWQNTSNHVDILRSRIVNARSLKTYQAILEPHAINWEHYTSLEAIADKTIQLPERNGGVLAKYAIIDSSDPDLRYFVWSVHHALYDAWSMPSLLNLVSQFYHEATTEQLAPPVPYANFARYLVDSDAQASDEFWKATFQNASGVSHFPTATLSDEESTYSSLQHTIQCRRDDLGADITIPTIVRAAWALLLGAHTGSDDVGFGETLSGRDIALEHVEDILGPTLTTVPWRVQIDRSATVGHFLHSLHKKSAEVIPHQHAGLQHIKRLGGSIAVASDFRNLLVIQASDEATDHQDLLQPLEENGNHKNFFTYPLVVECSIELNNLVLTIHHNETVMTSWQVERLAHQFDALVNQLSRLSQEPDRKVAELQFCSEEDLQMIKGWNNGTCDAVYDTIPSLFWQSVATYHDATSIRAWDGHLTYGSLAQHAGHLAKRLIQEGVKAETMVPCCMDKSLWTTVAMLAVVLAGGTIIPMDPAHPRARHAEIARECKAIIALCSPEYRDRFIGVVPTVIAIDQTLFTKQLCQDHIASEDLPLVADKDAAFVIYTSGSTGKAKGVVIEHGSFVASSRAYIKHMNLSATSSVFHFTSYAFDIAMGETFGALTTGACLCVPSEEMRVTDLPGVMNTLGATWAFLTPSLANMQDPSMFKTLQALVCGGEAMTSETVSKWSNKVKLINGYGPAECTVFALSNSNVSEDQDHSNIGRAMDGCQTWIVDTRDHNKLVPVGCEGELLISGPILSRGYLNDSAKTSKSFIENPAWMHHFDDKKHQNPVRLYKTGDLVRYRPDGNLTFIGRKDNQVKLHGQRMELGEIEACLESDPRLRNALVALPKSGVFKGRLVAVLSFKDSDSHNPGLVSSQFSPISESDMDVARLHLPDLQQILSENLPPYMMPSSWLVVEAIPLLLSGKLDRASTQKWLTEMVAETPEFLLDQQLGQDAGATDTTFVGQLLRKIWASVLRIPDESKLSGRSFISLGGDSIMAMQVMSRCRDHSIQLTMRDIMSGKSISDLVTLIEKEGRGKQTVNPEYEEDNSRPFALSPIQQLFFNNSNDKDRGDRFNQSQLFSITESIDKDTFANAIHALVQRHPMLRARFNKSSTTGQWSQQVAPDTEDSYGLHFHEVSDASQIARQIAASQESIGISGPVFIVDLFKMPDGHHHVSMIAHHLVVDVVSWINIAQDLETLLSTSPSMSSKPLSFRKWNAAQTEHATSVAKKNEDLLPFTVRPANLDYWGVSGVSNSYSQVTQQSFSLSDVDTVSLLLGDAHQALRTEPLDLFISALLISFGQCFPDRELPTLFNEGHGREPWDDSIDLSQTVGWFTSLCPIDISHHNADPTYTIDYVRKVKDVRRAIPGNGRPYFAQRYLTDSGKQSLDAHEPMEILLNFLGRSQQSGEDDSILRLSNLSMSDEDMASMSDVGPETRRLALFELSISILDEGIQFTFMYNKNMLHQDLIQQWVITCKEVLGNMAMELSTAPSCPTISDFPLMSLDYAELNKLVTKSLPTAHVRFDEVEDMYPCSPMQMGILISQLLDPSQYLFYAVLEVSASSRSAIDSAKLAQACSEVVERHDALRTVFIESVRSGGSFDQVVLRPGKPRIATFKCREIDVMAKLNTRSLGKTNKRHGVPILPYQITICETPQGKVFIKLEMNHAVTDGASTAIVLRDISSAYANNLHPTKAPSYKEYINYITKQPSDSSLMYWKSYLYGARNTEFPAMNSDHISGRSLGSIAVDFDRFSELQSLGLDAGVTFSNMIMVAWALVLRKYTNSQDVCFGYLGSGRDADIDGVDEIVGPLINMLVFRFQFTHSMLLKRLFLDTQEDYANSLPHQHFSLARVSHELGQSKRGFFNTAVSIQNAGASSDADFSALKFESVDAFDPSEYAVTLNANTTRGDEGIVFRYWTNILSHSQAKELAIVMSEVLSDMIDHSEEALSHLRVSQDSSLPTNPAQDLHGWTFEHSDTSEQFKTTNSTISSYSTGPGATLFSPATSWGSLPRDKDQVYNKLSALWKQHLDVATTDLTYDGSFFEYGGDSIIAMAMVGDARDRDLPLTVADIFKNPSFGTLLNCLRDKSYREGDMVSSDGNISLSGSKKEGIVVDEHTYEPLSLLPQQNAEQFVREHVCPVVGVSRASITDVLPTTDFQAQAIEGSLLDSRWMLNYFHLDGEGPLDVALLQESITNVIASYDVLRTVFVPYEATYLQVILRHVQSELIFHDVDDVEQFTLDLESDHLRQIPSPEKPSLRFILARHEPSERHRLFIRLSHALYDGVCFPAILNALKASYEGEPIATTPSYATYIHGLFSKANPDQHTYWRSLLEGSAPTNLIPRECRSMRTNPTQALRKIVATPSLATVNITTATVIKAAWSVVLAKNTGTRDVVFGHLISGRNSCHVPGIEAIVGPCLNVVPVRVQYQDSWMVLDLLQHIQHQQVDNIPHESLGFREIIRNCTNWDDDGANGFSTVVQHQSMAQTGSLDIGDNTYEVGVIASQEDTADFSVVTTPQDSSNTEVCFLYREGGVERTEFAEKLFDCLCSTIGDLSRDVKTPLVSWL</sequence>